<dbReference type="EMBL" id="CP001172">
    <property type="protein sequence ID" value="ACJ56939.1"/>
    <property type="molecule type" value="Genomic_DNA"/>
</dbReference>
<dbReference type="RefSeq" id="WP_000135204.1">
    <property type="nucleotide sequence ID" value="NZ_CP001172.1"/>
</dbReference>
<dbReference type="SMR" id="B7GW26"/>
<dbReference type="GeneID" id="92895293"/>
<dbReference type="HOGENOM" id="CLU_092403_0_2_6"/>
<dbReference type="Proteomes" id="UP000006924">
    <property type="component" value="Chromosome"/>
</dbReference>
<dbReference type="GO" id="GO:0015935">
    <property type="term" value="C:small ribosomal subunit"/>
    <property type="evidence" value="ECO:0007669"/>
    <property type="project" value="InterPro"/>
</dbReference>
<dbReference type="GO" id="GO:0019843">
    <property type="term" value="F:rRNA binding"/>
    <property type="evidence" value="ECO:0007669"/>
    <property type="project" value="UniProtKB-UniRule"/>
</dbReference>
<dbReference type="GO" id="GO:0003735">
    <property type="term" value="F:structural constituent of ribosome"/>
    <property type="evidence" value="ECO:0007669"/>
    <property type="project" value="InterPro"/>
</dbReference>
<dbReference type="GO" id="GO:0042274">
    <property type="term" value="P:ribosomal small subunit biogenesis"/>
    <property type="evidence" value="ECO:0007669"/>
    <property type="project" value="TreeGrafter"/>
</dbReference>
<dbReference type="GO" id="GO:0006412">
    <property type="term" value="P:translation"/>
    <property type="evidence" value="ECO:0007669"/>
    <property type="project" value="UniProtKB-UniRule"/>
</dbReference>
<dbReference type="CDD" id="cd00165">
    <property type="entry name" value="S4"/>
    <property type="match status" value="1"/>
</dbReference>
<dbReference type="FunFam" id="1.10.1050.10:FF:000001">
    <property type="entry name" value="30S ribosomal protein S4"/>
    <property type="match status" value="1"/>
</dbReference>
<dbReference type="FunFam" id="3.10.290.10:FF:000001">
    <property type="entry name" value="30S ribosomal protein S4"/>
    <property type="match status" value="1"/>
</dbReference>
<dbReference type="Gene3D" id="1.10.1050.10">
    <property type="entry name" value="Ribosomal Protein S4 Delta 41, Chain A, domain 1"/>
    <property type="match status" value="1"/>
</dbReference>
<dbReference type="Gene3D" id="3.10.290.10">
    <property type="entry name" value="RNA-binding S4 domain"/>
    <property type="match status" value="1"/>
</dbReference>
<dbReference type="HAMAP" id="MF_01306_B">
    <property type="entry name" value="Ribosomal_uS4_B"/>
    <property type="match status" value="1"/>
</dbReference>
<dbReference type="InterPro" id="IPR022801">
    <property type="entry name" value="Ribosomal_uS4"/>
</dbReference>
<dbReference type="InterPro" id="IPR005709">
    <property type="entry name" value="Ribosomal_uS4_bac-type"/>
</dbReference>
<dbReference type="InterPro" id="IPR018079">
    <property type="entry name" value="Ribosomal_uS4_CS"/>
</dbReference>
<dbReference type="InterPro" id="IPR001912">
    <property type="entry name" value="Ribosomal_uS4_N"/>
</dbReference>
<dbReference type="InterPro" id="IPR002942">
    <property type="entry name" value="S4_RNA-bd"/>
</dbReference>
<dbReference type="InterPro" id="IPR036986">
    <property type="entry name" value="S4_RNA-bd_sf"/>
</dbReference>
<dbReference type="NCBIfam" id="NF003717">
    <property type="entry name" value="PRK05327.1"/>
    <property type="match status" value="1"/>
</dbReference>
<dbReference type="NCBIfam" id="TIGR01017">
    <property type="entry name" value="rpsD_bact"/>
    <property type="match status" value="1"/>
</dbReference>
<dbReference type="PANTHER" id="PTHR11831">
    <property type="entry name" value="30S 40S RIBOSOMAL PROTEIN"/>
    <property type="match status" value="1"/>
</dbReference>
<dbReference type="PANTHER" id="PTHR11831:SF4">
    <property type="entry name" value="SMALL RIBOSOMAL SUBUNIT PROTEIN US4M"/>
    <property type="match status" value="1"/>
</dbReference>
<dbReference type="Pfam" id="PF00163">
    <property type="entry name" value="Ribosomal_S4"/>
    <property type="match status" value="1"/>
</dbReference>
<dbReference type="Pfam" id="PF01479">
    <property type="entry name" value="S4"/>
    <property type="match status" value="1"/>
</dbReference>
<dbReference type="SMART" id="SM01390">
    <property type="entry name" value="Ribosomal_S4"/>
    <property type="match status" value="1"/>
</dbReference>
<dbReference type="SMART" id="SM00363">
    <property type="entry name" value="S4"/>
    <property type="match status" value="1"/>
</dbReference>
<dbReference type="SUPFAM" id="SSF55174">
    <property type="entry name" value="Alpha-L RNA-binding motif"/>
    <property type="match status" value="1"/>
</dbReference>
<dbReference type="PROSITE" id="PS00632">
    <property type="entry name" value="RIBOSOMAL_S4"/>
    <property type="match status" value="1"/>
</dbReference>
<dbReference type="PROSITE" id="PS50889">
    <property type="entry name" value="S4"/>
    <property type="match status" value="1"/>
</dbReference>
<organism>
    <name type="scientific">Acinetobacter baumannii (strain AB307-0294)</name>
    <dbReference type="NCBI Taxonomy" id="557600"/>
    <lineage>
        <taxon>Bacteria</taxon>
        <taxon>Pseudomonadati</taxon>
        <taxon>Pseudomonadota</taxon>
        <taxon>Gammaproteobacteria</taxon>
        <taxon>Moraxellales</taxon>
        <taxon>Moraxellaceae</taxon>
        <taxon>Acinetobacter</taxon>
        <taxon>Acinetobacter calcoaceticus/baumannii complex</taxon>
    </lineage>
</organism>
<reference key="1">
    <citation type="journal article" date="2008" name="J. Bacteriol.">
        <title>Comparative genome sequence analysis of multidrug-resistant Acinetobacter baumannii.</title>
        <authorList>
            <person name="Adams M.D."/>
            <person name="Goglin K."/>
            <person name="Molyneaux N."/>
            <person name="Hujer K.M."/>
            <person name="Lavender H."/>
            <person name="Jamison J.J."/>
            <person name="MacDonald I.J."/>
            <person name="Martin K.M."/>
            <person name="Russo T."/>
            <person name="Campagnari A.A."/>
            <person name="Hujer A.M."/>
            <person name="Bonomo R.A."/>
            <person name="Gill S.R."/>
        </authorList>
    </citation>
    <scope>NUCLEOTIDE SEQUENCE [LARGE SCALE GENOMIC DNA]</scope>
    <source>
        <strain>AB307-0294</strain>
    </source>
</reference>
<accession>B7GW26</accession>
<keyword id="KW-0687">Ribonucleoprotein</keyword>
<keyword id="KW-0689">Ribosomal protein</keyword>
<keyword id="KW-0694">RNA-binding</keyword>
<keyword id="KW-0699">rRNA-binding</keyword>
<feature type="chain" id="PRO_1000140668" description="Small ribosomal subunit protein uS4">
    <location>
        <begin position="1"/>
        <end position="208"/>
    </location>
</feature>
<feature type="domain" description="S4 RNA-binding" evidence="1">
    <location>
        <begin position="98"/>
        <end position="160"/>
    </location>
</feature>
<feature type="region of interest" description="Disordered" evidence="2">
    <location>
        <begin position="24"/>
        <end position="52"/>
    </location>
</feature>
<proteinExistence type="inferred from homology"/>
<comment type="function">
    <text evidence="1">One of the primary rRNA binding proteins, it binds directly to 16S rRNA where it nucleates assembly of the body of the 30S subunit.</text>
</comment>
<comment type="function">
    <text evidence="1">With S5 and S12 plays an important role in translational accuracy.</text>
</comment>
<comment type="subunit">
    <text evidence="1">Part of the 30S ribosomal subunit. Contacts protein S5. The interaction surface between S4 and S5 is involved in control of translational fidelity.</text>
</comment>
<comment type="similarity">
    <text evidence="1">Belongs to the universal ribosomal protein uS4 family.</text>
</comment>
<evidence type="ECO:0000255" key="1">
    <source>
        <dbReference type="HAMAP-Rule" id="MF_01306"/>
    </source>
</evidence>
<evidence type="ECO:0000256" key="2">
    <source>
        <dbReference type="SAM" id="MobiDB-lite"/>
    </source>
</evidence>
<evidence type="ECO:0000305" key="3"/>
<name>RS4_ACIB3</name>
<gene>
    <name evidence="1" type="primary">rpsD</name>
    <name type="ordered locus">ABBFA_000456</name>
</gene>
<sequence>MARYIGPKCKLSRREGTDLQLKSGVKPFDVKTKKANKAPGQHGQARGGKQSEYSLQLREKQKVRRIYGVLERQFSNYYKEAARVKGATGENLLKLLESRLDNVVYRMGFGSTRAEARQLVSHRSITLNGRRVNIASIQVKAGDVIAVHEGAKQQLRIKNAIELAAQRGIPAWIEVDHSKLEGTFKAAPDRSDLPAEINESLIVELYSK</sequence>
<protein>
    <recommendedName>
        <fullName evidence="1">Small ribosomal subunit protein uS4</fullName>
    </recommendedName>
    <alternativeName>
        <fullName evidence="3">30S ribosomal protein S4</fullName>
    </alternativeName>
</protein>